<name>HIS6_DEIGD</name>
<dbReference type="EC" id="4.3.2.10" evidence="1"/>
<dbReference type="EMBL" id="CP000359">
    <property type="protein sequence ID" value="ABF46195.1"/>
    <property type="molecule type" value="Genomic_DNA"/>
</dbReference>
<dbReference type="RefSeq" id="WP_011531022.1">
    <property type="nucleotide sequence ID" value="NC_008025.1"/>
</dbReference>
<dbReference type="SMR" id="Q1IX39"/>
<dbReference type="STRING" id="319795.Dgeo_1900"/>
<dbReference type="KEGG" id="dge:Dgeo_1900"/>
<dbReference type="eggNOG" id="COG0107">
    <property type="taxonomic scope" value="Bacteria"/>
</dbReference>
<dbReference type="HOGENOM" id="CLU_048577_4_0_0"/>
<dbReference type="UniPathway" id="UPA00031">
    <property type="reaction ID" value="UER00010"/>
</dbReference>
<dbReference type="Proteomes" id="UP000002431">
    <property type="component" value="Chromosome"/>
</dbReference>
<dbReference type="GO" id="GO:0005737">
    <property type="term" value="C:cytoplasm"/>
    <property type="evidence" value="ECO:0007669"/>
    <property type="project" value="UniProtKB-SubCell"/>
</dbReference>
<dbReference type="GO" id="GO:0000107">
    <property type="term" value="F:imidazoleglycerol-phosphate synthase activity"/>
    <property type="evidence" value="ECO:0007669"/>
    <property type="project" value="UniProtKB-UniRule"/>
</dbReference>
<dbReference type="GO" id="GO:0016829">
    <property type="term" value="F:lyase activity"/>
    <property type="evidence" value="ECO:0007669"/>
    <property type="project" value="UniProtKB-KW"/>
</dbReference>
<dbReference type="GO" id="GO:0000105">
    <property type="term" value="P:L-histidine biosynthetic process"/>
    <property type="evidence" value="ECO:0007669"/>
    <property type="project" value="UniProtKB-UniRule"/>
</dbReference>
<dbReference type="CDD" id="cd04731">
    <property type="entry name" value="HisF"/>
    <property type="match status" value="1"/>
</dbReference>
<dbReference type="FunFam" id="3.20.20.70:FF:000006">
    <property type="entry name" value="Imidazole glycerol phosphate synthase subunit HisF"/>
    <property type="match status" value="1"/>
</dbReference>
<dbReference type="Gene3D" id="3.20.20.70">
    <property type="entry name" value="Aldolase class I"/>
    <property type="match status" value="1"/>
</dbReference>
<dbReference type="HAMAP" id="MF_01013">
    <property type="entry name" value="HisF"/>
    <property type="match status" value="1"/>
</dbReference>
<dbReference type="InterPro" id="IPR013785">
    <property type="entry name" value="Aldolase_TIM"/>
</dbReference>
<dbReference type="InterPro" id="IPR006062">
    <property type="entry name" value="His_biosynth"/>
</dbReference>
<dbReference type="InterPro" id="IPR004651">
    <property type="entry name" value="HisF"/>
</dbReference>
<dbReference type="InterPro" id="IPR050064">
    <property type="entry name" value="IGPS_HisA/HisF"/>
</dbReference>
<dbReference type="InterPro" id="IPR011060">
    <property type="entry name" value="RibuloseP-bd_barrel"/>
</dbReference>
<dbReference type="NCBIfam" id="TIGR00735">
    <property type="entry name" value="hisF"/>
    <property type="match status" value="1"/>
</dbReference>
<dbReference type="PANTHER" id="PTHR21235:SF2">
    <property type="entry name" value="IMIDAZOLE GLYCEROL PHOSPHATE SYNTHASE HISHF"/>
    <property type="match status" value="1"/>
</dbReference>
<dbReference type="PANTHER" id="PTHR21235">
    <property type="entry name" value="IMIDAZOLE GLYCEROL PHOSPHATE SYNTHASE SUBUNIT HISF/H IGP SYNTHASE SUBUNIT HISF/H"/>
    <property type="match status" value="1"/>
</dbReference>
<dbReference type="Pfam" id="PF00977">
    <property type="entry name" value="His_biosynth"/>
    <property type="match status" value="1"/>
</dbReference>
<dbReference type="SUPFAM" id="SSF51366">
    <property type="entry name" value="Ribulose-phoshate binding barrel"/>
    <property type="match status" value="1"/>
</dbReference>
<reference key="1">
    <citation type="submission" date="2006-04" db="EMBL/GenBank/DDBJ databases">
        <title>Complete sequence of chromosome of Deinococcus geothermalis DSM 11300.</title>
        <authorList>
            <person name="Copeland A."/>
            <person name="Lucas S."/>
            <person name="Lapidus A."/>
            <person name="Barry K."/>
            <person name="Detter J.C."/>
            <person name="Glavina del Rio T."/>
            <person name="Hammon N."/>
            <person name="Israni S."/>
            <person name="Dalin E."/>
            <person name="Tice H."/>
            <person name="Pitluck S."/>
            <person name="Brettin T."/>
            <person name="Bruce D."/>
            <person name="Han C."/>
            <person name="Tapia R."/>
            <person name="Saunders E."/>
            <person name="Gilna P."/>
            <person name="Schmutz J."/>
            <person name="Larimer F."/>
            <person name="Land M."/>
            <person name="Hauser L."/>
            <person name="Kyrpides N."/>
            <person name="Kim E."/>
            <person name="Daly M.J."/>
            <person name="Fredrickson J.K."/>
            <person name="Makarova K.S."/>
            <person name="Gaidamakova E.K."/>
            <person name="Zhai M."/>
            <person name="Richardson P."/>
        </authorList>
    </citation>
    <scope>NUCLEOTIDE SEQUENCE [LARGE SCALE GENOMIC DNA]</scope>
    <source>
        <strain>DSM 11300 / CIP 105573 / AG-3a</strain>
    </source>
</reference>
<organism>
    <name type="scientific">Deinococcus geothermalis (strain DSM 11300 / CIP 105573 / AG-3a)</name>
    <dbReference type="NCBI Taxonomy" id="319795"/>
    <lineage>
        <taxon>Bacteria</taxon>
        <taxon>Thermotogati</taxon>
        <taxon>Deinococcota</taxon>
        <taxon>Deinococci</taxon>
        <taxon>Deinococcales</taxon>
        <taxon>Deinococcaceae</taxon>
        <taxon>Deinococcus</taxon>
    </lineage>
</organism>
<comment type="function">
    <text evidence="1">IGPS catalyzes the conversion of PRFAR and glutamine to IGP, AICAR and glutamate. The HisF subunit catalyzes the cyclization activity that produces IGP and AICAR from PRFAR using the ammonia provided by the HisH subunit.</text>
</comment>
<comment type="catalytic activity">
    <reaction evidence="1">
        <text>5-[(5-phospho-1-deoxy-D-ribulos-1-ylimino)methylamino]-1-(5-phospho-beta-D-ribosyl)imidazole-4-carboxamide + L-glutamine = D-erythro-1-(imidazol-4-yl)glycerol 3-phosphate + 5-amino-1-(5-phospho-beta-D-ribosyl)imidazole-4-carboxamide + L-glutamate + H(+)</text>
        <dbReference type="Rhea" id="RHEA:24793"/>
        <dbReference type="ChEBI" id="CHEBI:15378"/>
        <dbReference type="ChEBI" id="CHEBI:29985"/>
        <dbReference type="ChEBI" id="CHEBI:58278"/>
        <dbReference type="ChEBI" id="CHEBI:58359"/>
        <dbReference type="ChEBI" id="CHEBI:58475"/>
        <dbReference type="ChEBI" id="CHEBI:58525"/>
        <dbReference type="EC" id="4.3.2.10"/>
    </reaction>
</comment>
<comment type="pathway">
    <text evidence="1">Amino-acid biosynthesis; L-histidine biosynthesis; L-histidine from 5-phospho-alpha-D-ribose 1-diphosphate: step 5/9.</text>
</comment>
<comment type="subunit">
    <text evidence="1">Heterodimer of HisH and HisF.</text>
</comment>
<comment type="subcellular location">
    <subcellularLocation>
        <location evidence="1">Cytoplasm</location>
    </subcellularLocation>
</comment>
<comment type="similarity">
    <text evidence="1">Belongs to the HisA/HisF family.</text>
</comment>
<accession>Q1IX39</accession>
<sequence>MLTKRIIPCLDVQNGRVVKNVRFFENHRDAGDPLALAQLYEAQQADELVFYDITATHEGRQLLLDVAARVAEQVMMPLTVGGGVNAVSDFRQLLLAGADKISVNSGAVRRPELIREASDHFGAQCVVLSIDAKRRPGSEGWTVHVGGGRVDTGLDLIEWAQQGQALGAGEICLNVMDADGTRAGFDLEATRAVASAVDLPVIASGGAGRLEDFRDVLLDGETGGRADAALAASVFHFGELTVPQVKTYLRGEGLPVRPEWREA</sequence>
<proteinExistence type="inferred from homology"/>
<evidence type="ECO:0000255" key="1">
    <source>
        <dbReference type="HAMAP-Rule" id="MF_01013"/>
    </source>
</evidence>
<keyword id="KW-0028">Amino-acid biosynthesis</keyword>
<keyword id="KW-0963">Cytoplasm</keyword>
<keyword id="KW-0368">Histidine biosynthesis</keyword>
<keyword id="KW-0456">Lyase</keyword>
<gene>
    <name evidence="1" type="primary">hisF</name>
    <name type="ordered locus">Dgeo_1900</name>
</gene>
<protein>
    <recommendedName>
        <fullName evidence="1">Imidazole glycerol phosphate synthase subunit HisF</fullName>
        <ecNumber evidence="1">4.3.2.10</ecNumber>
    </recommendedName>
    <alternativeName>
        <fullName evidence="1">IGP synthase cyclase subunit</fullName>
    </alternativeName>
    <alternativeName>
        <fullName evidence="1">IGP synthase subunit HisF</fullName>
    </alternativeName>
    <alternativeName>
        <fullName evidence="1">ImGP synthase subunit HisF</fullName>
        <shortName evidence="1">IGPS subunit HisF</shortName>
    </alternativeName>
</protein>
<feature type="chain" id="PRO_1000063053" description="Imidazole glycerol phosphate synthase subunit HisF">
    <location>
        <begin position="1"/>
        <end position="263"/>
    </location>
</feature>
<feature type="active site" evidence="1">
    <location>
        <position position="11"/>
    </location>
</feature>
<feature type="active site" evidence="1">
    <location>
        <position position="131"/>
    </location>
</feature>